<gene>
    <name evidence="3" type="primary">SHH</name>
</gene>
<feature type="signal peptide" evidence="3">
    <location>
        <begin position="1"/>
        <end position="26"/>
    </location>
</feature>
<feature type="chain" id="PRO_0000013217" description="Sonic hedgehog protein">
    <location>
        <begin position="27"/>
        <end position="425"/>
    </location>
</feature>
<feature type="chain" id="PRO_0000013218" description="Sonic hedgehog protein N-product">
    <location>
        <begin position="27"/>
        <end position="200"/>
    </location>
</feature>
<feature type="short sequence motif" description="Cardin-Weintraub" evidence="4">
    <location>
        <begin position="35"/>
        <end position="41"/>
    </location>
</feature>
<feature type="binding site" evidence="3">
    <location>
        <position position="92"/>
    </location>
    <ligand>
        <name>Ca(2+)</name>
        <dbReference type="ChEBI" id="CHEBI:29108"/>
        <label>1</label>
    </ligand>
</feature>
<feature type="binding site" evidence="3">
    <location>
        <position position="93"/>
    </location>
    <ligand>
        <name>Ca(2+)</name>
        <dbReference type="ChEBI" id="CHEBI:29108"/>
        <label>1</label>
    </ligand>
</feature>
<feature type="binding site" evidence="3">
    <location>
        <position position="93"/>
    </location>
    <ligand>
        <name>Ca(2+)</name>
        <dbReference type="ChEBI" id="CHEBI:29108"/>
        <label>2</label>
    </ligand>
</feature>
<feature type="binding site" evidence="3">
    <location>
        <position position="98"/>
    </location>
    <ligand>
        <name>Ca(2+)</name>
        <dbReference type="ChEBI" id="CHEBI:29108"/>
        <label>1</label>
    </ligand>
</feature>
<feature type="binding site" evidence="3">
    <location>
        <position position="128"/>
    </location>
    <ligand>
        <name>Ca(2+)</name>
        <dbReference type="ChEBI" id="CHEBI:29108"/>
        <label>1</label>
    </ligand>
</feature>
<feature type="binding site" evidence="3">
    <location>
        <position position="129"/>
    </location>
    <ligand>
        <name>Ca(2+)</name>
        <dbReference type="ChEBI" id="CHEBI:29108"/>
        <label>1</label>
    </ligand>
</feature>
<feature type="binding site" evidence="3">
    <location>
        <position position="129"/>
    </location>
    <ligand>
        <name>Ca(2+)</name>
        <dbReference type="ChEBI" id="CHEBI:29108"/>
        <label>2</label>
    </ligand>
</feature>
<feature type="binding site" evidence="3">
    <location>
        <position position="132"/>
    </location>
    <ligand>
        <name>Ca(2+)</name>
        <dbReference type="ChEBI" id="CHEBI:29108"/>
        <label>2</label>
    </ligand>
</feature>
<feature type="binding site" evidence="3">
    <location>
        <position position="134"/>
    </location>
    <ligand>
        <name>Ca(2+)</name>
        <dbReference type="ChEBI" id="CHEBI:29108"/>
        <label>2</label>
    </ligand>
</feature>
<feature type="binding site" evidence="3">
    <location>
        <position position="143"/>
    </location>
    <ligand>
        <name>Zn(2+)</name>
        <dbReference type="ChEBI" id="CHEBI:29105"/>
    </ligand>
</feature>
<feature type="binding site" evidence="3">
    <location>
        <position position="150"/>
    </location>
    <ligand>
        <name>Zn(2+)</name>
        <dbReference type="ChEBI" id="CHEBI:29105"/>
    </ligand>
</feature>
<feature type="binding site" evidence="3">
    <location>
        <position position="185"/>
    </location>
    <ligand>
        <name>Zn(2+)</name>
        <dbReference type="ChEBI" id="CHEBI:29105"/>
    </ligand>
</feature>
<feature type="site" description="Cleavage; by autolysis" evidence="2">
    <location>
        <begin position="200"/>
        <end position="201"/>
    </location>
</feature>
<feature type="site" description="Involved in cholesterol transfer" evidence="2">
    <location>
        <position position="246"/>
    </location>
</feature>
<feature type="site" description="Involved in auto-cleavage" evidence="2">
    <location>
        <position position="270"/>
    </location>
</feature>
<feature type="site" description="Essential for auto-cleavage" evidence="2">
    <location>
        <position position="273"/>
    </location>
</feature>
<feature type="lipid moiety-binding region" description="N-palmitoyl cysteine" evidence="1">
    <location>
        <position position="27"/>
    </location>
</feature>
<feature type="lipid moiety-binding region" description="Cholesterol glycine ester" evidence="4">
    <location>
        <position position="200"/>
    </location>
</feature>
<feature type="glycosylation site" description="N-linked (GlcNAc...) asparagine" evidence="5">
    <location>
        <position position="282"/>
    </location>
</feature>
<sequence length="425" mass="46474">MVEMLLLTRILLVGFICALLVSSGLTCGPGRGIGKRRHPKKLTPLAYKQFIPNVAEKTLGASGRYEGKITRNSERFKELTPNYNPDIIFKDEENTGADRLMTQRCKDKLNALAISVMNQWPGVKLRVTEGWDEDGHHSEESLHYEGRAVDITTSDRDRSKYGMLARLAVEAGFDWVYYESKAHIHCSVKAENSVAAKSGGCFPGSATVHLEHGGTKLVKDLSPGDRVLAADADGRLLYSDFLTFLDRMDSSRKLFYVIETRQPRARLLLTAAHLLFVAPQHNQSEATGSTSGQALFASNVKPGQRVYVLGEGGQQLLPASVHSVSLREEASGAYAPLTAQGTILINRVLASCYAVIEEHSWAHWAFAPFRLAQGLLAALCPDGAIPTAATTTTGIHWYSRLLYRIGSWVLDGDALHPLGMVAPAS</sequence>
<evidence type="ECO:0000250" key="1"/>
<evidence type="ECO:0000250" key="2">
    <source>
        <dbReference type="UniProtKB" id="Q02936"/>
    </source>
</evidence>
<evidence type="ECO:0000250" key="3">
    <source>
        <dbReference type="UniProtKB" id="Q15465"/>
    </source>
</evidence>
<evidence type="ECO:0000250" key="4">
    <source>
        <dbReference type="UniProtKB" id="Q62226"/>
    </source>
</evidence>
<evidence type="ECO:0000255" key="5"/>
<evidence type="ECO:0000269" key="6">
    <source>
    </source>
</evidence>
<evidence type="ECO:0000305" key="7"/>
<name>SHH_CHICK</name>
<keyword id="KW-0068">Autocatalytic cleavage</keyword>
<keyword id="KW-0106">Calcium</keyword>
<keyword id="KW-1003">Cell membrane</keyword>
<keyword id="KW-0217">Developmental protein</keyword>
<keyword id="KW-0256">Endoplasmic reticulum</keyword>
<keyword id="KW-0325">Glycoprotein</keyword>
<keyword id="KW-0333">Golgi apparatus</keyword>
<keyword id="KW-0378">Hydrolase</keyword>
<keyword id="KW-0449">Lipoprotein</keyword>
<keyword id="KW-0472">Membrane</keyword>
<keyword id="KW-0479">Metal-binding</keyword>
<keyword id="KW-0564">Palmitate</keyword>
<keyword id="KW-0645">Protease</keyword>
<keyword id="KW-1185">Reference proteome</keyword>
<keyword id="KW-0732">Signal</keyword>
<keyword id="KW-0808">Transferase</keyword>
<keyword id="KW-0862">Zinc</keyword>
<comment type="function">
    <molecule>Sonic hedgehog protein</molecule>
    <text evidence="3 4 6">The C-terminal part of the sonic hedgehog protein precursor displays an autoproteolysis and a cholesterol transferase activity (By similarity). Both activities result in the cleavage of the full-length protein into two parts (ShhN and ShhC) followed by the covalent attachment of a cholesterol moiety to the C-terminal of the newly generated ShhN (By similarity). Both activities occur in the endoplasmic reticulum (By similarity). Once cleaved, ShhC is degraded in the endoplasmic reticulum (By similarity).</text>
</comment>
<comment type="function">
    <molecule>Sonic hedgehog protein N-product</molecule>
    <text evidence="3 4 6">The dually lipidated sonic hedgehog protein N-product (ShhNp) is a morphogen which is essential for a variety of patterning events during development. Induces ventral cell fate in the neural tube and somites (PubMed:7736596). Involved in the patterning of the anterior-posterior axis of the developing limb bud (By similarity). Essential for axon guidance (By similarity). Binds to the patched (PTCH1) receptor, which functions in association with smoothened (SMO), to activate the transcription of target genes (By similarity). In the absence of SHH, PTCH1 represses the constitutive signaling activity of SMO (By similarity).</text>
</comment>
<comment type="catalytic activity">
    <molecule>Sonic hedgehog protein</molecule>
    <reaction evidence="4">
        <text>glycyl-L-cysteinyl-[protein] + cholesterol + H(+) = [protein]-C-terminal glycyl cholesterol ester + N-terminal L-cysteinyl-[protein]</text>
        <dbReference type="Rhea" id="RHEA:59504"/>
        <dbReference type="Rhea" id="RHEA-COMP:12707"/>
        <dbReference type="Rhea" id="RHEA-COMP:15369"/>
        <dbReference type="Rhea" id="RHEA-COMP:15374"/>
        <dbReference type="ChEBI" id="CHEBI:15378"/>
        <dbReference type="ChEBI" id="CHEBI:16113"/>
        <dbReference type="ChEBI" id="CHEBI:65250"/>
        <dbReference type="ChEBI" id="CHEBI:143135"/>
        <dbReference type="ChEBI" id="CHEBI:143140"/>
    </reaction>
    <physiologicalReaction direction="left-to-right" evidence="4">
        <dbReference type="Rhea" id="RHEA:59505"/>
    </physiologicalReaction>
</comment>
<comment type="subunit">
    <text evidence="3 4">Interacts with HHATL/GUP1 which negatively regulates HHAT-mediated palmitoylation of the SHH N-terminus (By similarity). Interacts with BOC and CDON (By similarity). Interacts with HHIP (By similarity). Interacts with DISP1 via its cholesterol anchor (By similarity). Interacts with SCUBE2 (By similarity).</text>
</comment>
<comment type="subunit">
    <molecule>Sonic hedgehog protein N-product</molecule>
    <text evidence="3">Multimer.</text>
</comment>
<comment type="subcellular location">
    <molecule>Sonic hedgehog protein</molecule>
    <subcellularLocation>
        <location evidence="3">Endoplasmic reticulum membrane</location>
    </subcellularLocation>
    <subcellularLocation>
        <location evidence="3">Golgi apparatus membrane</location>
    </subcellularLocation>
    <text evidence="3">Co-localizes with HHAT in the ER and Golgi membrane.</text>
</comment>
<comment type="subcellular location">
    <molecule>Sonic hedgehog protein N-product</molecule>
    <subcellularLocation>
        <location evidence="4">Cell membrane</location>
        <topology evidence="4">Lipid-anchor</topology>
    </subcellularLocation>
    <text evidence="4">The dual-lipidated sonic hedgehog protein N-product (ShhNp) is firmly tethered to the cell membrane where it forms multimers (By similarity). Further solubilization and release from the cell surface seem to be achieved through different mechanisms, including the interaction with DISP1 and SCUBE2, movement by lipoprotein particles, transport by cellular extensions called cytonemes or by the proteolytic removal of both terminal lipidated peptides.</text>
</comment>
<comment type="tissue specificity">
    <text>Expressed in the posterior limb bud mesenchyme, the Hensen node, the notochord, and the floor plate of the neural tube.</text>
</comment>
<comment type="developmental stage">
    <text>First detectable at stage 17 during the initiation of limb bud formation. From that point onwards, the expression pattern exactly matches the location of the zone of polarizing activity (ZPA).</text>
</comment>
<comment type="induction">
    <text>By retinoic acid.</text>
</comment>
<comment type="domain">
    <molecule>Sonic hedgehog protein N-product</molecule>
    <text evidence="4">Binds calcium and zinc ions; this stabilizes the protein fold and is essential for protein-protein interactions mediated by this domain.</text>
</comment>
<comment type="domain">
    <molecule>Sonic hedgehog protein N-product</molecule>
    <text evidence="4">The Cardin-Weintraub (CW) motif is required for heparan sulfate binding of the solubilized ShhNp (By similarity). The N-terminal palmitoylated peptide is cleaved at the Heparan sulfate-binding Cardin-Weintraub (CW) motif site (By similarity). The cleavage reduced the interactions with heparan sulfate. The cleavage is enhanced by SCUBE2 (By similarity).</text>
</comment>
<comment type="PTM">
    <molecule>Sonic hedgehog protein</molecule>
    <text evidence="4 6">The C-terminal domain displays an autoproteolysis activity and a cholesterol transferase activity (By similarity). Both activities result in the cleavage of the full-length protein and covalent attachment of a cholesterol moiety to the C-terminal of the newly generated N-terminal fragment (ShhN) (By similarity). Cholesterylation is required for the sonic hedgehog protein N-product targeting to lipid rafts and multimerization (By similarity). ShhN is the active species in both local and long-range signaling, whereas the C-product (ShhC) is degraded in the reticulum endoplasmic (By similarity).</text>
</comment>
<comment type="PTM">
    <molecule>Sonic hedgehog protein N-product</molecule>
    <text evidence="4">N-palmitoylation by HHAT of ShhN is required for sonic hedgehog protein N-product multimerization and full activity (By similarity). It is a prerequisite for the membrane-proximal positioning and the subsequent shedding of this N-terminal peptide (By similarity).</text>
</comment>
<comment type="PTM">
    <molecule>Sonic hedgehog protein N-product</molecule>
    <text evidence="4">The lipidated N- and C-terminal peptides of ShhNp can be cleaved (shedding) (By similarity). The N-terminal palmitoylated peptide is cleaved at the Cardin-Weintraub (CW) motif site (By similarity). The cleavage reduced the interactions with heparan sulfate (By similarity). The cleavage is enhanced by SCUBE2 (By similarity).</text>
</comment>
<comment type="similarity">
    <text evidence="7">Belongs to the hedgehog family.</text>
</comment>
<comment type="caution">
    <text evidence="4">The several steps and mechanisms that permit controlled Shh dispersion and gradient formation remain controversial. The ShhNC C-terminal domain displays an autoproteolysis activity and a cholesterol transferase activity resulting in the cleavage and covalent attachment of a cholesterol moiety to the C-terminal of the newly generated N-terminal fragment (ShhN). The protein is further modified by covalent addition of palmitate at the N-terminal of ShhN, resulting to the dual-lipidated Shh (ShhNp). ShhNp is firmly tethered to the cell membrane where it forms multimers. Further solubilization and release from the cell surface seem to be achieved through different mechanisms, including the interaction with DISP1 and SCUBE2, movement by lipoprotein particles, transport by cellular extensions called cytonemes or by proteolytic removal of both terminal lipidated peptides. Once released, the fully processed Shh can signal within embryonic tissues both at short and long-range.</text>
</comment>
<organism>
    <name type="scientific">Gallus gallus</name>
    <name type="common">Chicken</name>
    <dbReference type="NCBI Taxonomy" id="9031"/>
    <lineage>
        <taxon>Eukaryota</taxon>
        <taxon>Metazoa</taxon>
        <taxon>Chordata</taxon>
        <taxon>Craniata</taxon>
        <taxon>Vertebrata</taxon>
        <taxon>Euteleostomi</taxon>
        <taxon>Archelosauria</taxon>
        <taxon>Archosauria</taxon>
        <taxon>Dinosauria</taxon>
        <taxon>Saurischia</taxon>
        <taxon>Theropoda</taxon>
        <taxon>Coelurosauria</taxon>
        <taxon>Aves</taxon>
        <taxon>Neognathae</taxon>
        <taxon>Galloanserae</taxon>
        <taxon>Galliformes</taxon>
        <taxon>Phasianidae</taxon>
        <taxon>Phasianinae</taxon>
        <taxon>Gallus</taxon>
    </lineage>
</organism>
<reference key="1">
    <citation type="journal article" date="1993" name="Cell">
        <title>Sonic hedgehog mediates the polarizing activity of the ZPA.</title>
        <authorList>
            <person name="Riddle R.D."/>
            <person name="Johnson R.L."/>
            <person name="Laufer E."/>
            <person name="Tabin C."/>
        </authorList>
    </citation>
    <scope>NUCLEOTIDE SEQUENCE [MRNA]</scope>
    <source>
        <tissue>Limb bud</tissue>
    </source>
</reference>
<reference key="2">
    <citation type="journal article" date="1995" name="Cell">
        <title>Floor plate and motor neuron induction by different concentrations of the amino-terminal cleavage product of sonic hedgehog autoproteolysis.</title>
        <authorList>
            <person name="Roelink H."/>
            <person name="Porter J.A."/>
            <person name="Chiang C."/>
            <person name="Tanabe Y."/>
            <person name="Chang D.T."/>
            <person name="Beachy P.A."/>
            <person name="Jessell T.M."/>
        </authorList>
    </citation>
    <scope>FUNCTION</scope>
    <scope>PROTEOLYTIC PROCESSING</scope>
    <scope>AUTOCATALYTIC CLEAVAGE</scope>
</reference>
<reference key="3">
    <citation type="journal article" date="1995" name="Mol. Cell. Biol.">
        <title>Proteolytic processing yields two secreted forms of sonic hedgehog.</title>
        <authorList>
            <person name="Bumcrot D.A."/>
            <person name="Takada R."/>
            <person name="McMahon A.P."/>
        </authorList>
    </citation>
    <scope>GLYCOSYLATION</scope>
</reference>
<dbReference type="EC" id="3.1.-.-" evidence="4"/>
<dbReference type="EMBL" id="L28099">
    <property type="protein sequence ID" value="AAA72428.1"/>
    <property type="molecule type" value="mRNA"/>
</dbReference>
<dbReference type="PIR" id="A49424">
    <property type="entry name" value="A49424"/>
</dbReference>
<dbReference type="RefSeq" id="NP_990152.1">
    <property type="nucleotide sequence ID" value="NM_204821.1"/>
</dbReference>
<dbReference type="SMR" id="Q91035"/>
<dbReference type="FunCoup" id="Q91035">
    <property type="interactions" value="106"/>
</dbReference>
<dbReference type="STRING" id="9031.ENSGALP00000010292"/>
<dbReference type="MEROPS" id="C46.002"/>
<dbReference type="GlyCosmos" id="Q91035">
    <property type="glycosylation" value="1 site, No reported glycans"/>
</dbReference>
<dbReference type="GlyGen" id="Q91035">
    <property type="glycosylation" value="1 site"/>
</dbReference>
<dbReference type="PaxDb" id="9031-ENSGALP00000010292"/>
<dbReference type="GeneID" id="395615"/>
<dbReference type="KEGG" id="gga:395615"/>
<dbReference type="CTD" id="6469"/>
<dbReference type="VEuPathDB" id="HostDB:geneid_395615"/>
<dbReference type="eggNOG" id="KOG3638">
    <property type="taxonomic scope" value="Eukaryota"/>
</dbReference>
<dbReference type="InParanoid" id="Q91035"/>
<dbReference type="OMA" id="HWVSSLL"/>
<dbReference type="OrthoDB" id="5212at2759"/>
<dbReference type="PhylomeDB" id="Q91035"/>
<dbReference type="PRO" id="PR:Q91035"/>
<dbReference type="Proteomes" id="UP000000539">
    <property type="component" value="Unassembled WGS sequence"/>
</dbReference>
<dbReference type="GO" id="GO:0005783">
    <property type="term" value="C:endoplasmic reticulum"/>
    <property type="evidence" value="ECO:0000250"/>
    <property type="project" value="UniProtKB"/>
</dbReference>
<dbReference type="GO" id="GO:0005789">
    <property type="term" value="C:endoplasmic reticulum membrane"/>
    <property type="evidence" value="ECO:0007669"/>
    <property type="project" value="UniProtKB-SubCell"/>
</dbReference>
<dbReference type="GO" id="GO:0005576">
    <property type="term" value="C:extracellular region"/>
    <property type="evidence" value="ECO:0000303"/>
    <property type="project" value="Roslin"/>
</dbReference>
<dbReference type="GO" id="GO:0005615">
    <property type="term" value="C:extracellular space"/>
    <property type="evidence" value="ECO:0000314"/>
    <property type="project" value="AgBase"/>
</dbReference>
<dbReference type="GO" id="GO:0005794">
    <property type="term" value="C:Golgi apparatus"/>
    <property type="evidence" value="ECO:0000250"/>
    <property type="project" value="UniProtKB"/>
</dbReference>
<dbReference type="GO" id="GO:0000139">
    <property type="term" value="C:Golgi membrane"/>
    <property type="evidence" value="ECO:0007669"/>
    <property type="project" value="UniProtKB-SubCell"/>
</dbReference>
<dbReference type="GO" id="GO:0005886">
    <property type="term" value="C:plasma membrane"/>
    <property type="evidence" value="ECO:0007669"/>
    <property type="project" value="UniProtKB-SubCell"/>
</dbReference>
<dbReference type="GO" id="GO:0005509">
    <property type="term" value="F:calcium ion binding"/>
    <property type="evidence" value="ECO:0000250"/>
    <property type="project" value="UniProtKB"/>
</dbReference>
<dbReference type="GO" id="GO:0140853">
    <property type="term" value="F:cholesterol-protein transferase activity"/>
    <property type="evidence" value="ECO:0000250"/>
    <property type="project" value="UniProtKB"/>
</dbReference>
<dbReference type="GO" id="GO:0016015">
    <property type="term" value="F:morphogen activity"/>
    <property type="evidence" value="ECO:0000303"/>
    <property type="project" value="Roslin"/>
</dbReference>
<dbReference type="GO" id="GO:0005113">
    <property type="term" value="F:patched binding"/>
    <property type="evidence" value="ECO:0000318"/>
    <property type="project" value="GO_Central"/>
</dbReference>
<dbReference type="GO" id="GO:0008233">
    <property type="term" value="F:peptidase activity"/>
    <property type="evidence" value="ECO:0000250"/>
    <property type="project" value="UniProtKB"/>
</dbReference>
<dbReference type="GO" id="GO:0008270">
    <property type="term" value="F:zinc ion binding"/>
    <property type="evidence" value="ECO:0000250"/>
    <property type="project" value="UniProtKB"/>
</dbReference>
<dbReference type="GO" id="GO:0009952">
    <property type="term" value="P:anterior/posterior pattern specification"/>
    <property type="evidence" value="ECO:0000314"/>
    <property type="project" value="Roslin"/>
</dbReference>
<dbReference type="GO" id="GO:0097190">
    <property type="term" value="P:apoptotic signaling pathway"/>
    <property type="evidence" value="ECO:0000250"/>
    <property type="project" value="UniProtKB"/>
</dbReference>
<dbReference type="GO" id="GO:0001709">
    <property type="term" value="P:cell fate determination"/>
    <property type="evidence" value="ECO:0000303"/>
    <property type="project" value="AgBase"/>
</dbReference>
<dbReference type="GO" id="GO:0001708">
    <property type="term" value="P:cell fate specification"/>
    <property type="evidence" value="ECO:0000318"/>
    <property type="project" value="GO_Central"/>
</dbReference>
<dbReference type="GO" id="GO:0060573">
    <property type="term" value="P:cell fate specification involved in pattern specification"/>
    <property type="evidence" value="ECO:0000304"/>
    <property type="project" value="AgBase"/>
</dbReference>
<dbReference type="GO" id="GO:0007267">
    <property type="term" value="P:cell-cell signaling"/>
    <property type="evidence" value="ECO:0007669"/>
    <property type="project" value="InterPro"/>
</dbReference>
<dbReference type="GO" id="GO:0060591">
    <property type="term" value="P:chondroblast differentiation"/>
    <property type="evidence" value="ECO:0000315"/>
    <property type="project" value="AgBase"/>
</dbReference>
<dbReference type="GO" id="GO:0071679">
    <property type="term" value="P:commissural neuron axon guidance"/>
    <property type="evidence" value="ECO:0000315"/>
    <property type="project" value="AgBase"/>
</dbReference>
<dbReference type="GO" id="GO:0042733">
    <property type="term" value="P:embryonic digit morphogenesis"/>
    <property type="evidence" value="ECO:0000250"/>
    <property type="project" value="UniProtKB"/>
</dbReference>
<dbReference type="GO" id="GO:0030326">
    <property type="term" value="P:embryonic limb morphogenesis"/>
    <property type="evidence" value="ECO:0000314"/>
    <property type="project" value="Roslin"/>
</dbReference>
<dbReference type="GO" id="GO:0009880">
    <property type="term" value="P:embryonic pattern specification"/>
    <property type="evidence" value="ECO:0000315"/>
    <property type="project" value="AgBase"/>
</dbReference>
<dbReference type="GO" id="GO:0060059">
    <property type="term" value="P:embryonic retina morphogenesis in camera-type eye"/>
    <property type="evidence" value="ECO:0000315"/>
    <property type="project" value="AgBase"/>
</dbReference>
<dbReference type="GO" id="GO:0090269">
    <property type="term" value="P:fibroblast growth factor production"/>
    <property type="evidence" value="ECO:0000314"/>
    <property type="project" value="AgBase"/>
</dbReference>
<dbReference type="GO" id="GO:0021508">
    <property type="term" value="P:floor plate formation"/>
    <property type="evidence" value="ECO:0000315"/>
    <property type="project" value="AgBase"/>
</dbReference>
<dbReference type="GO" id="GO:0003430">
    <property type="term" value="P:growth plate cartilage chondrocyte growth"/>
    <property type="evidence" value="ECO:0000315"/>
    <property type="project" value="AgBase"/>
</dbReference>
<dbReference type="GO" id="GO:0048877">
    <property type="term" value="P:homeostasis of number of retina cells"/>
    <property type="evidence" value="ECO:0000315"/>
    <property type="project" value="AgBase"/>
</dbReference>
<dbReference type="GO" id="GO:0016539">
    <property type="term" value="P:intein-mediated protein splicing"/>
    <property type="evidence" value="ECO:0007669"/>
    <property type="project" value="InterPro"/>
</dbReference>
<dbReference type="GO" id="GO:0043066">
    <property type="term" value="P:negative regulation of apoptotic process"/>
    <property type="evidence" value="ECO:0000250"/>
    <property type="project" value="UniProtKB"/>
</dbReference>
<dbReference type="GO" id="GO:0030514">
    <property type="term" value="P:negative regulation of BMP signaling pathway"/>
    <property type="evidence" value="ECO:0000315"/>
    <property type="project" value="AgBase"/>
</dbReference>
<dbReference type="GO" id="GO:0048709">
    <property type="term" value="P:oligodendrocyte differentiation"/>
    <property type="evidence" value="ECO:0000318"/>
    <property type="project" value="GO_Central"/>
</dbReference>
<dbReference type="GO" id="GO:0003408">
    <property type="term" value="P:optic cup formation involved in camera-type eye development"/>
    <property type="evidence" value="ECO:0000315"/>
    <property type="project" value="AgBase"/>
</dbReference>
<dbReference type="GO" id="GO:0021631">
    <property type="term" value="P:optic nerve morphogenesis"/>
    <property type="evidence" value="ECO:0000315"/>
    <property type="project" value="AgBase"/>
</dbReference>
<dbReference type="GO" id="GO:0009949">
    <property type="term" value="P:polarity specification of anterior/posterior axis"/>
    <property type="evidence" value="ECO:0000250"/>
    <property type="project" value="UniProtKB"/>
</dbReference>
<dbReference type="GO" id="GO:0009951">
    <property type="term" value="P:polarity specification of dorsal/ventral axis"/>
    <property type="evidence" value="ECO:0000303"/>
    <property type="project" value="AgBase"/>
</dbReference>
<dbReference type="GO" id="GO:0010628">
    <property type="term" value="P:positive regulation of gene expression"/>
    <property type="evidence" value="ECO:0000304"/>
    <property type="project" value="AgBase"/>
</dbReference>
<dbReference type="GO" id="GO:0061075">
    <property type="term" value="P:positive regulation of neural retina development"/>
    <property type="evidence" value="ECO:0000315"/>
    <property type="project" value="AgBase"/>
</dbReference>
<dbReference type="GO" id="GO:0045880">
    <property type="term" value="P:positive regulation of smoothened signaling pathway"/>
    <property type="evidence" value="ECO:0000250"/>
    <property type="project" value="UniProtKB"/>
</dbReference>
<dbReference type="GO" id="GO:0016540">
    <property type="term" value="P:protein autoprocessing"/>
    <property type="evidence" value="ECO:0007669"/>
    <property type="project" value="InterPro"/>
</dbReference>
<dbReference type="GO" id="GO:0060785">
    <property type="term" value="P:regulation of apoptosis involved in tissue homeostasis"/>
    <property type="evidence" value="ECO:0000315"/>
    <property type="project" value="AgBase"/>
</dbReference>
<dbReference type="GO" id="GO:0060786">
    <property type="term" value="P:regulation of cell differentiation involved in tissue homeostasis"/>
    <property type="evidence" value="ECO:0000304"/>
    <property type="project" value="AgBase"/>
</dbReference>
<dbReference type="GO" id="GO:0010468">
    <property type="term" value="P:regulation of gene expression"/>
    <property type="evidence" value="ECO:0000315"/>
    <property type="project" value="AgBase"/>
</dbReference>
<dbReference type="GO" id="GO:2000177">
    <property type="term" value="P:regulation of neural precursor cell proliferation"/>
    <property type="evidence" value="ECO:0000315"/>
    <property type="project" value="AgBase"/>
</dbReference>
<dbReference type="GO" id="GO:0032526">
    <property type="term" value="P:response to retinoic acid"/>
    <property type="evidence" value="ECO:0000314"/>
    <property type="project" value="Roslin"/>
</dbReference>
<dbReference type="GO" id="GO:0001895">
    <property type="term" value="P:retina homeostasis"/>
    <property type="evidence" value="ECO:0000315"/>
    <property type="project" value="AgBase"/>
</dbReference>
<dbReference type="GO" id="GO:0003406">
    <property type="term" value="P:retinal pigment epithelium development"/>
    <property type="evidence" value="ECO:0000315"/>
    <property type="project" value="AgBase"/>
</dbReference>
<dbReference type="GO" id="GO:0097264">
    <property type="term" value="P:self proteolysis"/>
    <property type="evidence" value="ECO:0000314"/>
    <property type="project" value="AgBase"/>
</dbReference>
<dbReference type="GO" id="GO:0023052">
    <property type="term" value="P:signaling"/>
    <property type="evidence" value="ECO:0000315"/>
    <property type="project" value="AgBase"/>
</dbReference>
<dbReference type="GO" id="GO:0007224">
    <property type="term" value="P:smoothened signaling pathway"/>
    <property type="evidence" value="ECO:0000318"/>
    <property type="project" value="GO_Central"/>
</dbReference>
<dbReference type="GO" id="GO:0021513">
    <property type="term" value="P:spinal cord dorsal/ventral patterning"/>
    <property type="evidence" value="ECO:0000315"/>
    <property type="project" value="AgBase"/>
</dbReference>
<dbReference type="GO" id="GO:0009888">
    <property type="term" value="P:tissue development"/>
    <property type="evidence" value="ECO:0000315"/>
    <property type="project" value="AgBase"/>
</dbReference>
<dbReference type="CDD" id="cd00081">
    <property type="entry name" value="Hint"/>
    <property type="match status" value="1"/>
</dbReference>
<dbReference type="FunFam" id="2.170.16.10:FF:000001">
    <property type="entry name" value="Indian hedgehog"/>
    <property type="match status" value="1"/>
</dbReference>
<dbReference type="FunFam" id="3.30.1380.10:FF:000001">
    <property type="entry name" value="Indian hedgehog"/>
    <property type="match status" value="1"/>
</dbReference>
<dbReference type="Gene3D" id="3.30.1380.10">
    <property type="match status" value="1"/>
</dbReference>
<dbReference type="Gene3D" id="2.170.16.10">
    <property type="entry name" value="Hedgehog/Intein (Hint) domain"/>
    <property type="match status" value="1"/>
</dbReference>
<dbReference type="InterPro" id="IPR001657">
    <property type="entry name" value="Hedgehog"/>
</dbReference>
<dbReference type="InterPro" id="IPR001767">
    <property type="entry name" value="Hedgehog_Hint"/>
</dbReference>
<dbReference type="InterPro" id="IPR009045">
    <property type="entry name" value="Hedgehog_sig/DD-Pept_Zn-bd_sf"/>
</dbReference>
<dbReference type="InterPro" id="IPR050387">
    <property type="entry name" value="Hedgehog_Signaling"/>
</dbReference>
<dbReference type="InterPro" id="IPR000320">
    <property type="entry name" value="Hedgehog_signalling_dom"/>
</dbReference>
<dbReference type="InterPro" id="IPR003586">
    <property type="entry name" value="Hint_dom_C"/>
</dbReference>
<dbReference type="InterPro" id="IPR003587">
    <property type="entry name" value="Hint_dom_N"/>
</dbReference>
<dbReference type="InterPro" id="IPR036844">
    <property type="entry name" value="Hint_dom_sf"/>
</dbReference>
<dbReference type="InterPro" id="IPR006141">
    <property type="entry name" value="Intein_N"/>
</dbReference>
<dbReference type="PANTHER" id="PTHR11889">
    <property type="entry name" value="HEDGEHOG"/>
    <property type="match status" value="1"/>
</dbReference>
<dbReference type="PANTHER" id="PTHR11889:SF36">
    <property type="entry name" value="SONIC HEDGEHOG PROTEIN"/>
    <property type="match status" value="1"/>
</dbReference>
<dbReference type="Pfam" id="PF01085">
    <property type="entry name" value="HH_signal"/>
    <property type="match status" value="1"/>
</dbReference>
<dbReference type="Pfam" id="PF01079">
    <property type="entry name" value="Hint"/>
    <property type="match status" value="1"/>
</dbReference>
<dbReference type="PIRSF" id="PIRSF009400">
    <property type="entry name" value="Peptidase_C46"/>
    <property type="match status" value="1"/>
</dbReference>
<dbReference type="PRINTS" id="PR00632">
    <property type="entry name" value="SONICHHOG"/>
</dbReference>
<dbReference type="SMART" id="SM00305">
    <property type="entry name" value="HintC"/>
    <property type="match status" value="1"/>
</dbReference>
<dbReference type="SMART" id="SM00306">
    <property type="entry name" value="HintN"/>
    <property type="match status" value="1"/>
</dbReference>
<dbReference type="SUPFAM" id="SSF55166">
    <property type="entry name" value="Hedgehog/DD-peptidase"/>
    <property type="match status" value="1"/>
</dbReference>
<dbReference type="SUPFAM" id="SSF51294">
    <property type="entry name" value="Hedgehog/intein (Hint) domain"/>
    <property type="match status" value="1"/>
</dbReference>
<dbReference type="PROSITE" id="PS50817">
    <property type="entry name" value="INTEIN_N_TER"/>
    <property type="match status" value="1"/>
</dbReference>
<protein>
    <recommendedName>
        <fullName evidence="7">Sonic hedgehog protein</fullName>
        <shortName>SHH</shortName>
        <ecNumber evidence="4">3.1.-.-</ecNumber>
    </recommendedName>
    <alternativeName>
        <fullName evidence="4">Shh unprocessed N-terminal signaling and C-terminal autoprocessing domains</fullName>
        <shortName evidence="4">ShhNC</shortName>
    </alternativeName>
    <component>
        <recommendedName>
            <fullName>Sonic hedgehog protein N-product</fullName>
            <shortName>ShhN</shortName>
        </recommendedName>
        <alternativeName>
            <fullName evidence="4">Shh N-terminal processed signaling domains</fullName>
            <shortName evidence="4">ShhNp</shortName>
        </alternativeName>
    </component>
</protein>
<accession>Q91035</accession>
<proteinExistence type="evidence at protein level"/>